<sequence>MVNAPIKLLIAASGTGGHLFPAIALAEKLPDYEIEWLGVPNRLETQLVPKQYPLNTIAVEGFQQGLGISSLVILGKLIGSILKVRRLLKQGNFQGVVTTGGYIAGPAVIAARSLGLPVIFHESNALPGKVTRFFGPWCSVVALGFDVATKYLPRATSVCVGTPVRSQFLNLGNNSQLDLAIPGDVPVIVVFGGSQGAVAVNQLVRQAAPAWFEAGAYVVHLTGDRDPDVDSLKHPQYIELPFYDNMAALLQRANLAISRSGAGSLTELTVCGTPAILIPYPFAAEDHQSYNAEVFTKAGAALTFKQSDLTAELLQTQVLNLLQSPTELAKMGENAKAIAVPDSADKLATLVREVVER</sequence>
<keyword id="KW-0131">Cell cycle</keyword>
<keyword id="KW-0132">Cell division</keyword>
<keyword id="KW-0997">Cell inner membrane</keyword>
<keyword id="KW-1003">Cell membrane</keyword>
<keyword id="KW-0133">Cell shape</keyword>
<keyword id="KW-0961">Cell wall biogenesis/degradation</keyword>
<keyword id="KW-0328">Glycosyltransferase</keyword>
<keyword id="KW-0472">Membrane</keyword>
<keyword id="KW-0573">Peptidoglycan synthesis</keyword>
<keyword id="KW-1185">Reference proteome</keyword>
<keyword id="KW-0808">Transferase</keyword>
<protein>
    <recommendedName>
        <fullName evidence="1">UDP-N-acetylglucosamine--N-acetylmuramyl-(pentapeptide) pyrophosphoryl-undecaprenol N-acetylglucosamine transferase</fullName>
        <ecNumber evidence="1">2.4.1.227</ecNumber>
    </recommendedName>
    <alternativeName>
        <fullName evidence="1">Undecaprenyl-PP-MurNAc-pentapeptide-UDPGlcNAc GlcNAc transferase</fullName>
    </alternativeName>
</protein>
<feature type="chain" id="PRO_0000109136" description="UDP-N-acetylglucosamine--N-acetylmuramyl-(pentapeptide) pyrophosphoryl-undecaprenol N-acetylglucosamine transferase">
    <location>
        <begin position="1"/>
        <end position="357"/>
    </location>
</feature>
<feature type="binding site" evidence="1">
    <location>
        <begin position="15"/>
        <end position="17"/>
    </location>
    <ligand>
        <name>UDP-N-acetyl-alpha-D-glucosamine</name>
        <dbReference type="ChEBI" id="CHEBI:57705"/>
    </ligand>
</feature>
<feature type="binding site" evidence="1">
    <location>
        <position position="124"/>
    </location>
    <ligand>
        <name>UDP-N-acetyl-alpha-D-glucosamine</name>
        <dbReference type="ChEBI" id="CHEBI:57705"/>
    </ligand>
</feature>
<feature type="binding site" evidence="1">
    <location>
        <position position="165"/>
    </location>
    <ligand>
        <name>UDP-N-acetyl-alpha-D-glucosamine</name>
        <dbReference type="ChEBI" id="CHEBI:57705"/>
    </ligand>
</feature>
<feature type="binding site" evidence="1">
    <location>
        <position position="194"/>
    </location>
    <ligand>
        <name>UDP-N-acetyl-alpha-D-glucosamine</name>
        <dbReference type="ChEBI" id="CHEBI:57705"/>
    </ligand>
</feature>
<feature type="binding site" evidence="1">
    <location>
        <position position="288"/>
    </location>
    <ligand>
        <name>UDP-N-acetyl-alpha-D-glucosamine</name>
        <dbReference type="ChEBI" id="CHEBI:57705"/>
    </ligand>
</feature>
<name>MURG_NOSS1</name>
<proteinExistence type="inferred from homology"/>
<organism>
    <name type="scientific">Nostoc sp. (strain PCC 7120 / SAG 25.82 / UTEX 2576)</name>
    <dbReference type="NCBI Taxonomy" id="103690"/>
    <lineage>
        <taxon>Bacteria</taxon>
        <taxon>Bacillati</taxon>
        <taxon>Cyanobacteriota</taxon>
        <taxon>Cyanophyceae</taxon>
        <taxon>Nostocales</taxon>
        <taxon>Nostocaceae</taxon>
        <taxon>Nostoc</taxon>
    </lineage>
</organism>
<gene>
    <name evidence="1" type="primary">murG</name>
    <name type="ordered locus">alr0477</name>
</gene>
<reference key="1">
    <citation type="journal article" date="2001" name="DNA Res.">
        <title>Complete genomic sequence of the filamentous nitrogen-fixing cyanobacterium Anabaena sp. strain PCC 7120.</title>
        <authorList>
            <person name="Kaneko T."/>
            <person name="Nakamura Y."/>
            <person name="Wolk C.P."/>
            <person name="Kuritz T."/>
            <person name="Sasamoto S."/>
            <person name="Watanabe A."/>
            <person name="Iriguchi M."/>
            <person name="Ishikawa A."/>
            <person name="Kawashima K."/>
            <person name="Kimura T."/>
            <person name="Kishida Y."/>
            <person name="Kohara M."/>
            <person name="Matsumoto M."/>
            <person name="Matsuno A."/>
            <person name="Muraki A."/>
            <person name="Nakazaki N."/>
            <person name="Shimpo S."/>
            <person name="Sugimoto M."/>
            <person name="Takazawa M."/>
            <person name="Yamada M."/>
            <person name="Yasuda M."/>
            <person name="Tabata S."/>
        </authorList>
    </citation>
    <scope>NUCLEOTIDE SEQUENCE [LARGE SCALE GENOMIC DNA]</scope>
    <source>
        <strain>PCC 7120 / SAG 25.82 / UTEX 2576</strain>
    </source>
</reference>
<accession>Q8YZI3</accession>
<dbReference type="EC" id="2.4.1.227" evidence="1"/>
<dbReference type="EMBL" id="BA000019">
    <property type="protein sequence ID" value="BAB72435.1"/>
    <property type="status" value="ALT_INIT"/>
    <property type="molecule type" value="Genomic_DNA"/>
</dbReference>
<dbReference type="PIR" id="AD1866">
    <property type="entry name" value="AD1866"/>
</dbReference>
<dbReference type="RefSeq" id="WP_044520653.1">
    <property type="nucleotide sequence ID" value="NZ_RSCN01000024.1"/>
</dbReference>
<dbReference type="SMR" id="Q8YZI3"/>
<dbReference type="STRING" id="103690.gene:10492486"/>
<dbReference type="CAZy" id="GT28">
    <property type="family name" value="Glycosyltransferase Family 28"/>
</dbReference>
<dbReference type="KEGG" id="ana:alr0477"/>
<dbReference type="eggNOG" id="COG0707">
    <property type="taxonomic scope" value="Bacteria"/>
</dbReference>
<dbReference type="OrthoDB" id="9808936at2"/>
<dbReference type="UniPathway" id="UPA00219"/>
<dbReference type="Proteomes" id="UP000002483">
    <property type="component" value="Chromosome"/>
</dbReference>
<dbReference type="GO" id="GO:0005886">
    <property type="term" value="C:plasma membrane"/>
    <property type="evidence" value="ECO:0007669"/>
    <property type="project" value="UniProtKB-SubCell"/>
</dbReference>
<dbReference type="GO" id="GO:0051991">
    <property type="term" value="F:UDP-N-acetyl-D-glucosamine:N-acetylmuramoyl-L-alanyl-D-glutamyl-meso-2,6-diaminopimelyl-D-alanyl-D-alanine-diphosphoundecaprenol 4-beta-N-acetylglucosaminlytransferase activity"/>
    <property type="evidence" value="ECO:0007669"/>
    <property type="project" value="RHEA"/>
</dbReference>
<dbReference type="GO" id="GO:0050511">
    <property type="term" value="F:undecaprenyldiphospho-muramoylpentapeptide beta-N-acetylglucosaminyltransferase activity"/>
    <property type="evidence" value="ECO:0007669"/>
    <property type="project" value="UniProtKB-UniRule"/>
</dbReference>
<dbReference type="GO" id="GO:0005975">
    <property type="term" value="P:carbohydrate metabolic process"/>
    <property type="evidence" value="ECO:0007669"/>
    <property type="project" value="InterPro"/>
</dbReference>
<dbReference type="GO" id="GO:0051301">
    <property type="term" value="P:cell division"/>
    <property type="evidence" value="ECO:0007669"/>
    <property type="project" value="UniProtKB-KW"/>
</dbReference>
<dbReference type="GO" id="GO:0071555">
    <property type="term" value="P:cell wall organization"/>
    <property type="evidence" value="ECO:0007669"/>
    <property type="project" value="UniProtKB-KW"/>
</dbReference>
<dbReference type="GO" id="GO:0030259">
    <property type="term" value="P:lipid glycosylation"/>
    <property type="evidence" value="ECO:0007669"/>
    <property type="project" value="UniProtKB-UniRule"/>
</dbReference>
<dbReference type="GO" id="GO:0009252">
    <property type="term" value="P:peptidoglycan biosynthetic process"/>
    <property type="evidence" value="ECO:0007669"/>
    <property type="project" value="UniProtKB-UniRule"/>
</dbReference>
<dbReference type="GO" id="GO:0008360">
    <property type="term" value="P:regulation of cell shape"/>
    <property type="evidence" value="ECO:0007669"/>
    <property type="project" value="UniProtKB-KW"/>
</dbReference>
<dbReference type="CDD" id="cd03785">
    <property type="entry name" value="GT28_MurG"/>
    <property type="match status" value="1"/>
</dbReference>
<dbReference type="Gene3D" id="3.40.50.2000">
    <property type="entry name" value="Glycogen Phosphorylase B"/>
    <property type="match status" value="2"/>
</dbReference>
<dbReference type="HAMAP" id="MF_00033">
    <property type="entry name" value="MurG"/>
    <property type="match status" value="1"/>
</dbReference>
<dbReference type="InterPro" id="IPR006009">
    <property type="entry name" value="GlcNAc_MurG"/>
</dbReference>
<dbReference type="InterPro" id="IPR007235">
    <property type="entry name" value="Glyco_trans_28_C"/>
</dbReference>
<dbReference type="InterPro" id="IPR004276">
    <property type="entry name" value="GlycoTrans_28_N"/>
</dbReference>
<dbReference type="NCBIfam" id="TIGR01133">
    <property type="entry name" value="murG"/>
    <property type="match status" value="1"/>
</dbReference>
<dbReference type="PANTHER" id="PTHR21015:SF22">
    <property type="entry name" value="GLYCOSYLTRANSFERASE"/>
    <property type="match status" value="1"/>
</dbReference>
<dbReference type="PANTHER" id="PTHR21015">
    <property type="entry name" value="UDP-N-ACETYLGLUCOSAMINE--N-ACETYLMURAMYL-(PENTAPEPTIDE) PYROPHOSPHORYL-UNDECAPRENOL N-ACETYLGLUCOSAMINE TRANSFERASE 1"/>
    <property type="match status" value="1"/>
</dbReference>
<dbReference type="Pfam" id="PF04101">
    <property type="entry name" value="Glyco_tran_28_C"/>
    <property type="match status" value="1"/>
</dbReference>
<dbReference type="Pfam" id="PF03033">
    <property type="entry name" value="Glyco_transf_28"/>
    <property type="match status" value="1"/>
</dbReference>
<dbReference type="SUPFAM" id="SSF53756">
    <property type="entry name" value="UDP-Glycosyltransferase/glycogen phosphorylase"/>
    <property type="match status" value="1"/>
</dbReference>
<comment type="function">
    <text evidence="1">Cell wall formation. Catalyzes the transfer of a GlcNAc subunit on undecaprenyl-pyrophosphoryl-MurNAc-pentapeptide (lipid intermediate I) to form undecaprenyl-pyrophosphoryl-MurNAc-(pentapeptide)GlcNAc (lipid intermediate II).</text>
</comment>
<comment type="catalytic activity">
    <reaction evidence="1">
        <text>di-trans,octa-cis-undecaprenyl diphospho-N-acetyl-alpha-D-muramoyl-L-alanyl-D-glutamyl-meso-2,6-diaminopimeloyl-D-alanyl-D-alanine + UDP-N-acetyl-alpha-D-glucosamine = di-trans,octa-cis-undecaprenyl diphospho-[N-acetyl-alpha-D-glucosaminyl-(1-&gt;4)]-N-acetyl-alpha-D-muramoyl-L-alanyl-D-glutamyl-meso-2,6-diaminopimeloyl-D-alanyl-D-alanine + UDP + H(+)</text>
        <dbReference type="Rhea" id="RHEA:31227"/>
        <dbReference type="ChEBI" id="CHEBI:15378"/>
        <dbReference type="ChEBI" id="CHEBI:57705"/>
        <dbReference type="ChEBI" id="CHEBI:58223"/>
        <dbReference type="ChEBI" id="CHEBI:61387"/>
        <dbReference type="ChEBI" id="CHEBI:61388"/>
        <dbReference type="EC" id="2.4.1.227"/>
    </reaction>
</comment>
<comment type="pathway">
    <text evidence="1">Cell wall biogenesis; peptidoglycan biosynthesis.</text>
</comment>
<comment type="subcellular location">
    <subcellularLocation>
        <location evidence="1">Cell inner membrane</location>
        <topology evidence="1">Peripheral membrane protein</topology>
        <orientation evidence="1">Cytoplasmic side</orientation>
    </subcellularLocation>
</comment>
<comment type="similarity">
    <text evidence="1">Belongs to the glycosyltransferase 28 family. MurG subfamily.</text>
</comment>
<comment type="sequence caution" evidence="2">
    <conflict type="erroneous initiation">
        <sequence resource="EMBL-CDS" id="BAB72435"/>
    </conflict>
</comment>
<evidence type="ECO:0000255" key="1">
    <source>
        <dbReference type="HAMAP-Rule" id="MF_00033"/>
    </source>
</evidence>
<evidence type="ECO:0000305" key="2"/>